<proteinExistence type="inferred from homology"/>
<accession>Q53CG2</accession>
<name>COX7C_MACSL</name>
<feature type="transit peptide" description="Mitochondrion" evidence="1">
    <location>
        <begin position="1"/>
        <end position="16"/>
    </location>
</feature>
<feature type="chain" id="PRO_0000253611" description="Cytochrome c oxidase subunit 7C, mitochondrial">
    <location>
        <begin position="17"/>
        <end position="63"/>
    </location>
</feature>
<feature type="topological domain" description="Mitochondrial matrix" evidence="1">
    <location>
        <begin position="17"/>
        <end position="33"/>
    </location>
</feature>
<feature type="transmembrane region" description="Helical" evidence="1">
    <location>
        <begin position="34"/>
        <end position="60"/>
    </location>
</feature>
<feature type="topological domain" description="Mitochondrial intermembrane" evidence="1">
    <location>
        <begin position="61"/>
        <end position="63"/>
    </location>
</feature>
<feature type="modified residue" description="N6-acetyllysine; alternate" evidence="4">
    <location>
        <position position="25"/>
    </location>
</feature>
<feature type="modified residue" description="N6-succinyllysine; alternate" evidence="4">
    <location>
        <position position="25"/>
    </location>
</feature>
<reference key="1">
    <citation type="journal article" date="2005" name="Proc. Natl. Acad. Sci. U.S.A.">
        <title>Rapid electrostatic evolution at the binding site for cytochrome c on cytochrome c oxidase in anthropoid primates.</title>
        <authorList>
            <person name="Schmidt T.R."/>
            <person name="Wildman D.E."/>
            <person name="Uddin M."/>
            <person name="Opazo J.C."/>
            <person name="Goodman M."/>
            <person name="Grossman L.I."/>
        </authorList>
    </citation>
    <scope>NUCLEOTIDE SEQUENCE [MRNA]</scope>
</reference>
<protein>
    <recommendedName>
        <fullName>Cytochrome c oxidase subunit 7C, mitochondrial</fullName>
    </recommendedName>
    <alternativeName>
        <fullName>Cytochrome c oxidase polypeptide VIIc</fullName>
    </alternativeName>
</protein>
<keyword id="KW-0007">Acetylation</keyword>
<keyword id="KW-0472">Membrane</keyword>
<keyword id="KW-0496">Mitochondrion</keyword>
<keyword id="KW-0999">Mitochondrion inner membrane</keyword>
<keyword id="KW-0809">Transit peptide</keyword>
<keyword id="KW-0812">Transmembrane</keyword>
<keyword id="KW-1133">Transmembrane helix</keyword>
<dbReference type="EMBL" id="AY585856">
    <property type="protein sequence ID" value="AAW03185.1"/>
    <property type="molecule type" value="mRNA"/>
</dbReference>
<dbReference type="SMR" id="Q53CG2"/>
<dbReference type="UniPathway" id="UPA00705"/>
<dbReference type="GO" id="GO:0005743">
    <property type="term" value="C:mitochondrial inner membrane"/>
    <property type="evidence" value="ECO:0007669"/>
    <property type="project" value="UniProtKB-SubCell"/>
</dbReference>
<dbReference type="GO" id="GO:0045277">
    <property type="term" value="C:respiratory chain complex IV"/>
    <property type="evidence" value="ECO:0007669"/>
    <property type="project" value="InterPro"/>
</dbReference>
<dbReference type="GO" id="GO:0006123">
    <property type="term" value="P:mitochondrial electron transport, cytochrome c to oxygen"/>
    <property type="evidence" value="ECO:0007669"/>
    <property type="project" value="InterPro"/>
</dbReference>
<dbReference type="CDD" id="cd00929">
    <property type="entry name" value="Cyt_c_Oxidase_VIIc"/>
    <property type="match status" value="1"/>
</dbReference>
<dbReference type="FunFam" id="4.10.49.10:FF:000001">
    <property type="entry name" value="Cytochrome c oxidase subunit 7C"/>
    <property type="match status" value="1"/>
</dbReference>
<dbReference type="Gene3D" id="4.10.49.10">
    <property type="entry name" value="Cytochrome c oxidase subunit VIIc"/>
    <property type="match status" value="1"/>
</dbReference>
<dbReference type="InterPro" id="IPR004202">
    <property type="entry name" value="COX7C/Cox8"/>
</dbReference>
<dbReference type="InterPro" id="IPR036636">
    <property type="entry name" value="COX7C/Cox8_sf"/>
</dbReference>
<dbReference type="PANTHER" id="PTHR13313:SF0">
    <property type="entry name" value="CYTOCHROME C OXIDASE SUBUNIT 7C, MITOCHONDRIAL"/>
    <property type="match status" value="1"/>
</dbReference>
<dbReference type="PANTHER" id="PTHR13313">
    <property type="entry name" value="CYTOCHROME C OXIDASE SUBUNIT VIIC"/>
    <property type="match status" value="1"/>
</dbReference>
<dbReference type="Pfam" id="PF02935">
    <property type="entry name" value="COX7C"/>
    <property type="match status" value="1"/>
</dbReference>
<dbReference type="SUPFAM" id="SSF81427">
    <property type="entry name" value="Mitochondrial cytochrome c oxidase subunit VIIc (aka VIIIa)"/>
    <property type="match status" value="1"/>
</dbReference>
<gene>
    <name type="primary">COX7C</name>
</gene>
<sequence>MLGHSIRRFTTSVVRRSHYEEGPGKNLPFSVENKWTLLVKMCLFFGSAFSVPFLIVRHQLLKQ</sequence>
<evidence type="ECO:0000250" key="1">
    <source>
        <dbReference type="UniProtKB" id="P00430"/>
    </source>
</evidence>
<evidence type="ECO:0000250" key="2">
    <source>
        <dbReference type="UniProtKB" id="P04039"/>
    </source>
</evidence>
<evidence type="ECO:0000250" key="3">
    <source>
        <dbReference type="UniProtKB" id="P15954"/>
    </source>
</evidence>
<evidence type="ECO:0000250" key="4">
    <source>
        <dbReference type="UniProtKB" id="P17665"/>
    </source>
</evidence>
<evidence type="ECO:0000305" key="5"/>
<organism>
    <name type="scientific">Macaca silenus</name>
    <name type="common">Lion-tailed macaque</name>
    <dbReference type="NCBI Taxonomy" id="54601"/>
    <lineage>
        <taxon>Eukaryota</taxon>
        <taxon>Metazoa</taxon>
        <taxon>Chordata</taxon>
        <taxon>Craniata</taxon>
        <taxon>Vertebrata</taxon>
        <taxon>Euteleostomi</taxon>
        <taxon>Mammalia</taxon>
        <taxon>Eutheria</taxon>
        <taxon>Euarchontoglires</taxon>
        <taxon>Primates</taxon>
        <taxon>Haplorrhini</taxon>
        <taxon>Catarrhini</taxon>
        <taxon>Cercopithecidae</taxon>
        <taxon>Cercopithecinae</taxon>
        <taxon>Macaca</taxon>
    </lineage>
</organism>
<comment type="function">
    <text evidence="2">Component of the cytochrome c oxidase, the last enzyme in the mitochondrial electron transport chain which drives oxidative phosphorylation. The respiratory chain contains 3 multisubunit complexes succinate dehydrogenase (complex II, CII), ubiquinol-cytochrome c oxidoreductase (cytochrome b-c1 complex, complex III, CIII) and cytochrome c oxidase (complex IV, CIV), that cooperate to transfer electrons derived from NADH and succinate to molecular oxygen, creating an electrochemical gradient over the inner membrane that drives transmembrane transport and the ATP synthase. Cytochrome c oxidase is the component of the respiratory chain that catalyzes the reduction of oxygen to water. Electrons originating from reduced cytochrome c in the intermembrane space (IMS) are transferred via the dinuclear copper A center (CU(A)) of subunit 2 and heme A of subunit 1 to the active site in subunit 1, a binuclear center (BNC) formed by heme A3 and copper B (CU(B)). The BNC reduces molecular oxygen to 2 water molecules using 4 electrons from cytochrome c in the IMS and 4 protons from the mitochondrial matrix.</text>
</comment>
<comment type="pathway">
    <text evidence="2">Energy metabolism; oxidative phosphorylation.</text>
</comment>
<comment type="subunit">
    <text evidence="1 3">Component of the cytochrome c oxidase (complex IV, CIV), a multisubunit enzyme composed of 14 subunits. The complex is composed of a catalytic core of 3 subunits MT-CO1, MT-CO2 and MT-CO3, encoded in the mitochondrial DNA, and 11 supernumerary subunits COX4I, COX5A, COX5B, COX6A, COX6B, COX6C, COX7A, COX7B, COX7C, COX8 and NDUFA4, which are encoded in the nuclear genome. The complex exists as a monomer or a dimer and forms supercomplexes (SCs) in the inner mitochondrial membrane with NADH-ubiquinone oxidoreductase (complex I, CI) and ubiquinol-cytochrome c oxidoreductase (cytochrome b-c1 complex, complex III, CIII), resulting in different assemblies (supercomplex SCI(1)III(2)IV(1) and megacomplex MCI(2)III(2)IV(2)) (By similarity). Interacts with RAB5IF (By similarity).</text>
</comment>
<comment type="subcellular location">
    <subcellularLocation>
        <location evidence="1">Mitochondrion inner membrane</location>
        <topology evidence="1">Single-pass membrane protein</topology>
    </subcellularLocation>
</comment>
<comment type="similarity">
    <text evidence="5">Belongs to the cytochrome c oxidase VIIc family.</text>
</comment>